<organism>
    <name type="scientific">Helicobacter pylori (strain Shi470)</name>
    <dbReference type="NCBI Taxonomy" id="512562"/>
    <lineage>
        <taxon>Bacteria</taxon>
        <taxon>Pseudomonadati</taxon>
        <taxon>Campylobacterota</taxon>
        <taxon>Epsilonproteobacteria</taxon>
        <taxon>Campylobacterales</taxon>
        <taxon>Helicobacteraceae</taxon>
        <taxon>Helicobacter</taxon>
    </lineage>
</organism>
<keyword id="KW-0119">Carbohydrate metabolism</keyword>
<keyword id="KW-0963">Cytoplasm</keyword>
<keyword id="KW-0378">Hydrolase</keyword>
<keyword id="KW-0460">Magnesium</keyword>
<keyword id="KW-0479">Metal-binding</keyword>
<accession>B2UVU9</accession>
<reference key="1">
    <citation type="submission" date="2008-05" db="EMBL/GenBank/DDBJ databases">
        <title>Genome sequence of Helicobacter pylori from the remote Amazon: traces of Asian ancestry of the first Americans.</title>
        <authorList>
            <person name="Kersulyte D."/>
            <person name="Kalia A."/>
            <person name="Gilman R.H."/>
            <person name="Berg D.E."/>
        </authorList>
    </citation>
    <scope>NUCLEOTIDE SEQUENCE [LARGE SCALE GENOMIC DNA]</scope>
    <source>
        <strain>Shi470</strain>
    </source>
</reference>
<feature type="chain" id="PRO_0000364576" description="Fructose-1,6-bisphosphatase class 1">
    <location>
        <begin position="1"/>
        <end position="290"/>
    </location>
</feature>
<feature type="binding site" evidence="1">
    <location>
        <position position="78"/>
    </location>
    <ligand>
        <name>Mg(2+)</name>
        <dbReference type="ChEBI" id="CHEBI:18420"/>
        <label>1</label>
    </ligand>
</feature>
<feature type="binding site" evidence="1">
    <location>
        <position position="96"/>
    </location>
    <ligand>
        <name>Mg(2+)</name>
        <dbReference type="ChEBI" id="CHEBI:18420"/>
        <label>1</label>
    </ligand>
</feature>
<feature type="binding site" evidence="1">
    <location>
        <position position="96"/>
    </location>
    <ligand>
        <name>Mg(2+)</name>
        <dbReference type="ChEBI" id="CHEBI:18420"/>
        <label>2</label>
    </ligand>
</feature>
<feature type="binding site" evidence="1">
    <location>
        <position position="98"/>
    </location>
    <ligand>
        <name>Mg(2+)</name>
        <dbReference type="ChEBI" id="CHEBI:18420"/>
        <label>1</label>
    </ligand>
</feature>
<feature type="binding site" evidence="1">
    <location>
        <begin position="99"/>
        <end position="102"/>
    </location>
    <ligand>
        <name>substrate</name>
    </ligand>
</feature>
<feature type="binding site" evidence="1">
    <location>
        <position position="99"/>
    </location>
    <ligand>
        <name>Mg(2+)</name>
        <dbReference type="ChEBI" id="CHEBI:18420"/>
        <label>2</label>
    </ligand>
</feature>
<feature type="binding site" evidence="1">
    <location>
        <position position="201"/>
    </location>
    <ligand>
        <name>substrate</name>
    </ligand>
</feature>
<feature type="binding site" evidence="1">
    <location>
        <position position="226"/>
    </location>
    <ligand>
        <name>substrate</name>
    </ligand>
</feature>
<feature type="binding site" evidence="1">
    <location>
        <position position="232"/>
    </location>
    <ligand>
        <name>Mg(2+)</name>
        <dbReference type="ChEBI" id="CHEBI:18420"/>
        <label>2</label>
    </ligand>
</feature>
<sequence length="290" mass="32900">MDYKHFKGKHANIVIEIISLLEKGVKKAQEILEKPDAGSYTKLENSSGDTPIKADLALDKFLEENFLSLENVKSVFSEEKETPVTKENGSYLIAYDPLDGSSVMEANFLVGTIIGVYEKDYKAQNLAASLYVVFGHKIELVVALEEVYRYGFYQNKFHFIETIVLENKGKIIASGGNQKDFSSGLKKALEGFFAENYRLRYSGSMVADVHHVLIKKGGMFSYPQKKLRKLFEVFPLALMVEKAKGEAFYFDKGVKKRLLEQSVESYHEKSECYLASQHEAHILEKYLKGE</sequence>
<evidence type="ECO:0000255" key="1">
    <source>
        <dbReference type="HAMAP-Rule" id="MF_01855"/>
    </source>
</evidence>
<proteinExistence type="inferred from homology"/>
<protein>
    <recommendedName>
        <fullName evidence="1">Fructose-1,6-bisphosphatase class 1</fullName>
        <shortName evidence="1">FBPase class 1</shortName>
        <ecNumber evidence="1">3.1.3.11</ecNumber>
    </recommendedName>
    <alternativeName>
        <fullName evidence="1">D-fructose-1,6-bisphosphate 1-phosphohydrolase class 1</fullName>
    </alternativeName>
</protein>
<dbReference type="EC" id="3.1.3.11" evidence="1"/>
<dbReference type="EMBL" id="CP001072">
    <property type="protein sequence ID" value="ACD48981.1"/>
    <property type="molecule type" value="Genomic_DNA"/>
</dbReference>
<dbReference type="RefSeq" id="WP_000384779.1">
    <property type="nucleotide sequence ID" value="NC_010698.2"/>
</dbReference>
<dbReference type="SMR" id="B2UVU9"/>
<dbReference type="KEGG" id="hps:HPSH_07980"/>
<dbReference type="HOGENOM" id="CLU_039977_3_0_7"/>
<dbReference type="UniPathway" id="UPA00138"/>
<dbReference type="GO" id="GO:0005829">
    <property type="term" value="C:cytosol"/>
    <property type="evidence" value="ECO:0007669"/>
    <property type="project" value="TreeGrafter"/>
</dbReference>
<dbReference type="GO" id="GO:0042132">
    <property type="term" value="F:fructose 1,6-bisphosphate 1-phosphatase activity"/>
    <property type="evidence" value="ECO:0007669"/>
    <property type="project" value="UniProtKB-UniRule"/>
</dbReference>
<dbReference type="GO" id="GO:0000287">
    <property type="term" value="F:magnesium ion binding"/>
    <property type="evidence" value="ECO:0007669"/>
    <property type="project" value="UniProtKB-UniRule"/>
</dbReference>
<dbReference type="GO" id="GO:0030388">
    <property type="term" value="P:fructose 1,6-bisphosphate metabolic process"/>
    <property type="evidence" value="ECO:0007669"/>
    <property type="project" value="TreeGrafter"/>
</dbReference>
<dbReference type="GO" id="GO:0006002">
    <property type="term" value="P:fructose 6-phosphate metabolic process"/>
    <property type="evidence" value="ECO:0007669"/>
    <property type="project" value="TreeGrafter"/>
</dbReference>
<dbReference type="GO" id="GO:0006000">
    <property type="term" value="P:fructose metabolic process"/>
    <property type="evidence" value="ECO:0007669"/>
    <property type="project" value="TreeGrafter"/>
</dbReference>
<dbReference type="GO" id="GO:0006094">
    <property type="term" value="P:gluconeogenesis"/>
    <property type="evidence" value="ECO:0007669"/>
    <property type="project" value="UniProtKB-UniRule"/>
</dbReference>
<dbReference type="GO" id="GO:0005986">
    <property type="term" value="P:sucrose biosynthetic process"/>
    <property type="evidence" value="ECO:0007669"/>
    <property type="project" value="TreeGrafter"/>
</dbReference>
<dbReference type="FunFam" id="3.30.540.10:FF:000036">
    <property type="entry name" value="Fructose-1,6-bisphosphatase class 1"/>
    <property type="match status" value="1"/>
</dbReference>
<dbReference type="FunFam" id="3.40.190.80:FF:000028">
    <property type="entry name" value="Fructose-1,6-bisphosphatase class 1"/>
    <property type="match status" value="1"/>
</dbReference>
<dbReference type="Gene3D" id="3.40.190.80">
    <property type="match status" value="1"/>
</dbReference>
<dbReference type="Gene3D" id="3.30.540.10">
    <property type="entry name" value="Fructose-1,6-Bisphosphatase, subunit A, domain 1"/>
    <property type="match status" value="1"/>
</dbReference>
<dbReference type="HAMAP" id="MF_01855">
    <property type="entry name" value="FBPase_class1"/>
    <property type="match status" value="1"/>
</dbReference>
<dbReference type="InterPro" id="IPR044015">
    <property type="entry name" value="FBPase_C_dom"/>
</dbReference>
<dbReference type="InterPro" id="IPR000146">
    <property type="entry name" value="FBPase_class-1"/>
</dbReference>
<dbReference type="InterPro" id="IPR033391">
    <property type="entry name" value="FBPase_N"/>
</dbReference>
<dbReference type="InterPro" id="IPR023079">
    <property type="entry name" value="SBPase"/>
</dbReference>
<dbReference type="NCBIfam" id="NF006781">
    <property type="entry name" value="PRK09293.2-1"/>
    <property type="match status" value="1"/>
</dbReference>
<dbReference type="PANTHER" id="PTHR11556">
    <property type="entry name" value="FRUCTOSE-1,6-BISPHOSPHATASE-RELATED"/>
    <property type="match status" value="1"/>
</dbReference>
<dbReference type="PANTHER" id="PTHR11556:SF35">
    <property type="entry name" value="SEDOHEPTULOSE-1,7-BISPHOSPHATASE, CHLOROPLASTIC"/>
    <property type="match status" value="1"/>
</dbReference>
<dbReference type="Pfam" id="PF00316">
    <property type="entry name" value="FBPase"/>
    <property type="match status" value="1"/>
</dbReference>
<dbReference type="Pfam" id="PF18913">
    <property type="entry name" value="FBPase_C"/>
    <property type="match status" value="1"/>
</dbReference>
<dbReference type="PIRSF" id="PIRSF000904">
    <property type="entry name" value="FBPtase_SBPase"/>
    <property type="match status" value="1"/>
</dbReference>
<dbReference type="PRINTS" id="PR01958">
    <property type="entry name" value="S17BPHPHTASE"/>
</dbReference>
<dbReference type="SUPFAM" id="SSF56655">
    <property type="entry name" value="Carbohydrate phosphatase"/>
    <property type="match status" value="1"/>
</dbReference>
<name>F16PA_HELPS</name>
<gene>
    <name evidence="1" type="primary">fbp</name>
    <name type="ordered locus">HPSH_07980</name>
</gene>
<comment type="catalytic activity">
    <reaction evidence="1">
        <text>beta-D-fructose 1,6-bisphosphate + H2O = beta-D-fructose 6-phosphate + phosphate</text>
        <dbReference type="Rhea" id="RHEA:11064"/>
        <dbReference type="ChEBI" id="CHEBI:15377"/>
        <dbReference type="ChEBI" id="CHEBI:32966"/>
        <dbReference type="ChEBI" id="CHEBI:43474"/>
        <dbReference type="ChEBI" id="CHEBI:57634"/>
        <dbReference type="EC" id="3.1.3.11"/>
    </reaction>
</comment>
<comment type="cofactor">
    <cofactor evidence="1">
        <name>Mg(2+)</name>
        <dbReference type="ChEBI" id="CHEBI:18420"/>
    </cofactor>
    <text evidence="1">Binds 2 magnesium ions per subunit.</text>
</comment>
<comment type="pathway">
    <text evidence="1">Carbohydrate biosynthesis; gluconeogenesis.</text>
</comment>
<comment type="subunit">
    <text evidence="1">Homotetramer.</text>
</comment>
<comment type="subcellular location">
    <subcellularLocation>
        <location evidence="1">Cytoplasm</location>
    </subcellularLocation>
</comment>
<comment type="similarity">
    <text evidence="1">Belongs to the FBPase class 1 family.</text>
</comment>